<accession>Q8EPT1</accession>
<protein>
    <recommendedName>
        <fullName evidence="1">Putative pre-16S rRNA nuclease</fullName>
        <ecNumber evidence="1">3.1.-.-</ecNumber>
    </recommendedName>
</protein>
<comment type="function">
    <text evidence="1">Could be a nuclease involved in processing of the 5'-end of pre-16S rRNA.</text>
</comment>
<comment type="subcellular location">
    <subcellularLocation>
        <location evidence="1">Cytoplasm</location>
    </subcellularLocation>
</comment>
<comment type="similarity">
    <text evidence="1">Belongs to the YqgF nuclease family.</text>
</comment>
<feature type="chain" id="PRO_0000172107" description="Putative pre-16S rRNA nuclease">
    <location>
        <begin position="1"/>
        <end position="137"/>
    </location>
</feature>
<evidence type="ECO:0000255" key="1">
    <source>
        <dbReference type="HAMAP-Rule" id="MF_00651"/>
    </source>
</evidence>
<reference key="1">
    <citation type="journal article" date="2002" name="Nucleic Acids Res.">
        <title>Genome sequence of Oceanobacillus iheyensis isolated from the Iheya Ridge and its unexpected adaptive capabilities to extreme environments.</title>
        <authorList>
            <person name="Takami H."/>
            <person name="Takaki Y."/>
            <person name="Uchiyama I."/>
        </authorList>
    </citation>
    <scope>NUCLEOTIDE SEQUENCE [LARGE SCALE GENOMIC DNA]</scope>
    <source>
        <strain>DSM 14371 / CIP 107618 / JCM 11309 / KCTC 3954 / HTE831</strain>
    </source>
</reference>
<sequence length="137" mass="15240">MKIIGLDVGSKTIGVAVSDALGWTAQGVKTIRWDENDLSSADEELEKIISEHEIGKAIIGLPKNMNGTIGERGEASQRYANHIEKVFQIPVDLWDERLTTMAAERVLLEADMSRSKRKKVIDKMAAVMILQGYLDQK</sequence>
<keyword id="KW-0963">Cytoplasm</keyword>
<keyword id="KW-0378">Hydrolase</keyword>
<keyword id="KW-0540">Nuclease</keyword>
<keyword id="KW-1185">Reference proteome</keyword>
<keyword id="KW-0690">Ribosome biogenesis</keyword>
<name>YQGF_OCEIH</name>
<gene>
    <name type="ordered locus">OB2007</name>
</gene>
<dbReference type="EC" id="3.1.-.-" evidence="1"/>
<dbReference type="EMBL" id="BA000028">
    <property type="protein sequence ID" value="BAC13963.1"/>
    <property type="molecule type" value="Genomic_DNA"/>
</dbReference>
<dbReference type="RefSeq" id="WP_011066403.1">
    <property type="nucleotide sequence ID" value="NC_004193.1"/>
</dbReference>
<dbReference type="SMR" id="Q8EPT1"/>
<dbReference type="STRING" id="221109.gene:10734253"/>
<dbReference type="KEGG" id="oih:OB2007"/>
<dbReference type="eggNOG" id="COG0816">
    <property type="taxonomic scope" value="Bacteria"/>
</dbReference>
<dbReference type="HOGENOM" id="CLU_098240_2_0_9"/>
<dbReference type="OrthoDB" id="9796140at2"/>
<dbReference type="PhylomeDB" id="Q8EPT1"/>
<dbReference type="Proteomes" id="UP000000822">
    <property type="component" value="Chromosome"/>
</dbReference>
<dbReference type="GO" id="GO:0005829">
    <property type="term" value="C:cytosol"/>
    <property type="evidence" value="ECO:0007669"/>
    <property type="project" value="TreeGrafter"/>
</dbReference>
<dbReference type="GO" id="GO:0004518">
    <property type="term" value="F:nuclease activity"/>
    <property type="evidence" value="ECO:0007669"/>
    <property type="project" value="UniProtKB-KW"/>
</dbReference>
<dbReference type="GO" id="GO:0000967">
    <property type="term" value="P:rRNA 5'-end processing"/>
    <property type="evidence" value="ECO:0007669"/>
    <property type="project" value="UniProtKB-UniRule"/>
</dbReference>
<dbReference type="CDD" id="cd16964">
    <property type="entry name" value="YqgF"/>
    <property type="match status" value="1"/>
</dbReference>
<dbReference type="Gene3D" id="3.30.420.140">
    <property type="entry name" value="YqgF/RNase H-like domain"/>
    <property type="match status" value="1"/>
</dbReference>
<dbReference type="HAMAP" id="MF_00651">
    <property type="entry name" value="Nuclease_YqgF"/>
    <property type="match status" value="1"/>
</dbReference>
<dbReference type="InterPro" id="IPR012337">
    <property type="entry name" value="RNaseH-like_sf"/>
</dbReference>
<dbReference type="InterPro" id="IPR005227">
    <property type="entry name" value="YqgF"/>
</dbReference>
<dbReference type="InterPro" id="IPR006641">
    <property type="entry name" value="YqgF/RNaseH-like_dom"/>
</dbReference>
<dbReference type="InterPro" id="IPR037027">
    <property type="entry name" value="YqgF/RNaseH-like_dom_sf"/>
</dbReference>
<dbReference type="NCBIfam" id="TIGR00250">
    <property type="entry name" value="RNAse_H_YqgF"/>
    <property type="match status" value="1"/>
</dbReference>
<dbReference type="PANTHER" id="PTHR33317">
    <property type="entry name" value="POLYNUCLEOTIDYL TRANSFERASE, RIBONUCLEASE H-LIKE SUPERFAMILY PROTEIN"/>
    <property type="match status" value="1"/>
</dbReference>
<dbReference type="PANTHER" id="PTHR33317:SF4">
    <property type="entry name" value="POLYNUCLEOTIDYL TRANSFERASE, RIBONUCLEASE H-LIKE SUPERFAMILY PROTEIN"/>
    <property type="match status" value="1"/>
</dbReference>
<dbReference type="Pfam" id="PF03652">
    <property type="entry name" value="RuvX"/>
    <property type="match status" value="1"/>
</dbReference>
<dbReference type="SMART" id="SM00732">
    <property type="entry name" value="YqgFc"/>
    <property type="match status" value="1"/>
</dbReference>
<dbReference type="SUPFAM" id="SSF53098">
    <property type="entry name" value="Ribonuclease H-like"/>
    <property type="match status" value="1"/>
</dbReference>
<proteinExistence type="inferred from homology"/>
<organism>
    <name type="scientific">Oceanobacillus iheyensis (strain DSM 14371 / CIP 107618 / JCM 11309 / KCTC 3954 / HTE831)</name>
    <dbReference type="NCBI Taxonomy" id="221109"/>
    <lineage>
        <taxon>Bacteria</taxon>
        <taxon>Bacillati</taxon>
        <taxon>Bacillota</taxon>
        <taxon>Bacilli</taxon>
        <taxon>Bacillales</taxon>
        <taxon>Bacillaceae</taxon>
        <taxon>Oceanobacillus</taxon>
    </lineage>
</organism>